<protein>
    <recommendedName>
        <fullName>Ferredoxin-thioredoxin reductase catalytic chain, chloroplastic</fullName>
        <shortName>FTR-C</shortName>
        <ecNumber>1.8.7.2</ecNumber>
    </recommendedName>
    <alternativeName>
        <fullName>Ferredoxin-thioredoxin reductase subunit B</fullName>
        <shortName>FTR-B</shortName>
    </alternativeName>
</protein>
<reference key="1">
    <citation type="journal article" date="1993" name="Biochim. Biophys. Acta">
        <title>Cloning and sequencing of a corn (Zea mays) nuclear gene coding for the chloroplast specific catalytic subunit of ferredoxin-thioredoxin reductase.</title>
        <authorList>
            <person name="Marc-Martin S."/>
            <person name="Spielmann A."/>
            <person name="Stutz E."/>
            <person name="Schuermann P."/>
        </authorList>
    </citation>
    <scope>NUCLEOTIDE SEQUENCE [MRNA]</scope>
</reference>
<dbReference type="EC" id="1.8.7.2"/>
<dbReference type="EMBL" id="X73549">
    <property type="status" value="NOT_ANNOTATED_CDS"/>
    <property type="molecule type" value="mRNA"/>
</dbReference>
<dbReference type="PIR" id="S43714">
    <property type="entry name" value="S43714"/>
</dbReference>
<dbReference type="RefSeq" id="NP_001292798.1">
    <property type="nucleotide sequence ID" value="NM_001305869.1"/>
</dbReference>
<dbReference type="SMR" id="P41347"/>
<dbReference type="FunCoup" id="P41347">
    <property type="interactions" value="1289"/>
</dbReference>
<dbReference type="STRING" id="4577.P41347"/>
<dbReference type="PaxDb" id="4577-GRMZM2G122793_P01"/>
<dbReference type="EnsemblPlants" id="Zm00001eb373700_T001">
    <property type="protein sequence ID" value="Zm00001eb373700_P001"/>
    <property type="gene ID" value="Zm00001eb373700"/>
</dbReference>
<dbReference type="GeneID" id="542532"/>
<dbReference type="Gramene" id="Zm00001eb373700_T001">
    <property type="protein sequence ID" value="Zm00001eb373700_P001"/>
    <property type="gene ID" value="Zm00001eb373700"/>
</dbReference>
<dbReference type="KEGG" id="zma:542532"/>
<dbReference type="MaizeGDB" id="61547"/>
<dbReference type="eggNOG" id="ENOG502RZRI">
    <property type="taxonomic scope" value="Eukaryota"/>
</dbReference>
<dbReference type="HOGENOM" id="CLU_108772_1_0_1"/>
<dbReference type="InParanoid" id="P41347"/>
<dbReference type="OMA" id="YCHCLLF"/>
<dbReference type="OrthoDB" id="1641at2759"/>
<dbReference type="Proteomes" id="UP000007305">
    <property type="component" value="Chromosome 9"/>
</dbReference>
<dbReference type="ExpressionAtlas" id="P41347">
    <property type="expression patterns" value="baseline and differential"/>
</dbReference>
<dbReference type="GO" id="GO:0009507">
    <property type="term" value="C:chloroplast"/>
    <property type="evidence" value="ECO:0007669"/>
    <property type="project" value="UniProtKB-SubCell"/>
</dbReference>
<dbReference type="GO" id="GO:0051539">
    <property type="term" value="F:4 iron, 4 sulfur cluster binding"/>
    <property type="evidence" value="ECO:0000250"/>
    <property type="project" value="UniProtKB"/>
</dbReference>
<dbReference type="GO" id="GO:0009055">
    <property type="term" value="F:electron transfer activity"/>
    <property type="evidence" value="ECO:0000250"/>
    <property type="project" value="UniProtKB"/>
</dbReference>
<dbReference type="GO" id="GO:0103012">
    <property type="term" value="F:ferredoxin-thioredoxin reductase activity"/>
    <property type="evidence" value="ECO:0000250"/>
    <property type="project" value="UniProtKB"/>
</dbReference>
<dbReference type="GO" id="GO:0046872">
    <property type="term" value="F:metal ion binding"/>
    <property type="evidence" value="ECO:0007669"/>
    <property type="project" value="UniProtKB-KW"/>
</dbReference>
<dbReference type="GO" id="GO:0016730">
    <property type="term" value="F:oxidoreductase activity, acting on iron-sulfur proteins as donors"/>
    <property type="evidence" value="ECO:0007669"/>
    <property type="project" value="InterPro"/>
</dbReference>
<dbReference type="FunFam" id="3.90.460.10:FF:000001">
    <property type="entry name" value="Ferredoxin-thioredoxin reductase, catalytic chain"/>
    <property type="match status" value="1"/>
</dbReference>
<dbReference type="Gene3D" id="3.90.460.10">
    <property type="entry name" value="Ferredoxin thioredoxin reductase catalytic beta subunit"/>
    <property type="match status" value="1"/>
</dbReference>
<dbReference type="InterPro" id="IPR004209">
    <property type="entry name" value="FTR_bsu"/>
</dbReference>
<dbReference type="InterPro" id="IPR036644">
    <property type="entry name" value="FTR_bsu_sf"/>
</dbReference>
<dbReference type="PANTHER" id="PTHR35113">
    <property type="entry name" value="FERREDOXIN-THIOREDOXIN REDUCTASE CATALYTIC CHAIN, CHLOROPLASTIC"/>
    <property type="match status" value="1"/>
</dbReference>
<dbReference type="PANTHER" id="PTHR35113:SF1">
    <property type="entry name" value="FERREDOXIN-THIOREDOXIN REDUCTASE CATALYTIC CHAIN, CHLOROPLASTIC"/>
    <property type="match status" value="1"/>
</dbReference>
<dbReference type="Pfam" id="PF02943">
    <property type="entry name" value="FeThRed_B"/>
    <property type="match status" value="1"/>
</dbReference>
<dbReference type="SUPFAM" id="SSF57662">
    <property type="entry name" value="Ferredoxin thioredoxin reductase (FTR), catalytic beta chain"/>
    <property type="match status" value="1"/>
</dbReference>
<name>FTRC_MAIZE</name>
<accession>P41347</accession>
<keyword id="KW-0004">4Fe-4S</keyword>
<keyword id="KW-0150">Chloroplast</keyword>
<keyword id="KW-1015">Disulfide bond</keyword>
<keyword id="KW-0408">Iron</keyword>
<keyword id="KW-0411">Iron-sulfur</keyword>
<keyword id="KW-0479">Metal-binding</keyword>
<keyword id="KW-0560">Oxidoreductase</keyword>
<keyword id="KW-0934">Plastid</keyword>
<keyword id="KW-1185">Reference proteome</keyword>
<keyword id="KW-0809">Transit peptide</keyword>
<organism>
    <name type="scientific">Zea mays</name>
    <name type="common">Maize</name>
    <dbReference type="NCBI Taxonomy" id="4577"/>
    <lineage>
        <taxon>Eukaryota</taxon>
        <taxon>Viridiplantae</taxon>
        <taxon>Streptophyta</taxon>
        <taxon>Embryophyta</taxon>
        <taxon>Tracheophyta</taxon>
        <taxon>Spermatophyta</taxon>
        <taxon>Magnoliopsida</taxon>
        <taxon>Liliopsida</taxon>
        <taxon>Poales</taxon>
        <taxon>Poaceae</taxon>
        <taxon>PACMAD clade</taxon>
        <taxon>Panicoideae</taxon>
        <taxon>Andropogonodae</taxon>
        <taxon>Andropogoneae</taxon>
        <taxon>Tripsacinae</taxon>
        <taxon>Zea</taxon>
    </lineage>
</organism>
<comment type="function">
    <text evidence="1">Catalytic subunit of the ferredoxin-thioredoxin reductase (FTR), which catalyzes the two-electron reduction of thioredoxins by the electrons provided by reduced ferredoxin.</text>
</comment>
<comment type="catalytic activity">
    <reaction>
        <text>[thioredoxin]-disulfide + 2 reduced [2Fe-2S]-[ferredoxin] + 2 H(+) = [thioredoxin]-dithiol + 2 oxidized [2Fe-2S]-[ferredoxin]</text>
        <dbReference type="Rhea" id="RHEA:42336"/>
        <dbReference type="Rhea" id="RHEA-COMP:10000"/>
        <dbReference type="Rhea" id="RHEA-COMP:10001"/>
        <dbReference type="Rhea" id="RHEA-COMP:10698"/>
        <dbReference type="Rhea" id="RHEA-COMP:10700"/>
        <dbReference type="ChEBI" id="CHEBI:15378"/>
        <dbReference type="ChEBI" id="CHEBI:29950"/>
        <dbReference type="ChEBI" id="CHEBI:33737"/>
        <dbReference type="ChEBI" id="CHEBI:33738"/>
        <dbReference type="ChEBI" id="CHEBI:50058"/>
        <dbReference type="EC" id="1.8.7.2"/>
    </reaction>
</comment>
<comment type="cofactor">
    <cofactor evidence="1">
        <name>[4Fe-4S] cluster</name>
        <dbReference type="ChEBI" id="CHEBI:49883"/>
    </cofactor>
    <text evidence="1">Binds 1 [4Fe-4S] cluster.</text>
</comment>
<comment type="subunit">
    <text>Heterodimer of subunit A (variable subunit) and subunit B (catalytic subunit). Heterodimeric FTR forms a complex with ferredoxin and thioredoxin.</text>
</comment>
<comment type="subcellular location">
    <subcellularLocation>
        <location>Plastid</location>
        <location>Chloroplast</location>
    </subcellularLocation>
</comment>
<comment type="similarity">
    <text evidence="2">Belongs to the ferredoxin thioredoxin reductase beta subunit family.</text>
</comment>
<feature type="transit peptide" description="Chloroplast" evidence="1">
    <location>
        <begin position="1"/>
        <end position="38"/>
    </location>
</feature>
<feature type="chain" id="PRO_0000019426" description="Ferredoxin-thioredoxin reductase catalytic chain, chloroplastic">
    <location>
        <begin position="39"/>
        <end position="152"/>
    </location>
</feature>
<feature type="active site" description="Nucleophile" evidence="1">
    <location>
        <position position="93"/>
    </location>
</feature>
<feature type="binding site" evidence="1">
    <location>
        <position position="91"/>
    </location>
    <ligand>
        <name>[4Fe-4S] cluster</name>
        <dbReference type="ChEBI" id="CHEBI:49883"/>
    </ligand>
</feature>
<feature type="binding site" evidence="1">
    <location>
        <position position="110"/>
    </location>
    <ligand>
        <name>[4Fe-4S] cluster</name>
        <dbReference type="ChEBI" id="CHEBI:49883"/>
    </ligand>
</feature>
<feature type="binding site" evidence="1">
    <location>
        <position position="112"/>
    </location>
    <ligand>
        <name>[4Fe-4S] cluster</name>
        <dbReference type="ChEBI" id="CHEBI:49883"/>
    </ligand>
</feature>
<feature type="binding site" evidence="1">
    <location>
        <position position="121"/>
    </location>
    <ligand>
        <name>[4Fe-4S] cluster</name>
        <dbReference type="ChEBI" id="CHEBI:49883"/>
    </ligand>
</feature>
<feature type="site" description="Increases the nucleophilicity of the active site Cys" evidence="1">
    <location>
        <position position="122"/>
    </location>
</feature>
<feature type="disulfide bond" description="Redox-active" evidence="1">
    <location>
        <begin position="93"/>
        <end position="123"/>
    </location>
</feature>
<sequence length="152" mass="16740">MTSTVTTTVGCGGLPVRPLSTATRGRPRRCAVRAQAAGADASNDKSVEVMRKFSEQYARRSNTFFCADKTVTAVVIKGLADHRDTLGAPLCPCRHYDDKAAEVAQGFWNCPCVPMRERKECHCMLFLTPDNDFAGKDQVISFEEIKEATSKF</sequence>
<evidence type="ECO:0000250" key="1"/>
<evidence type="ECO:0000305" key="2"/>
<gene>
    <name type="primary">FTRC</name>
</gene>
<proteinExistence type="evidence at transcript level"/>